<gene>
    <name evidence="1" type="primary">cmk</name>
    <name type="ordered locus">CLD_2832</name>
</gene>
<feature type="chain" id="PRO_1000125281" description="Cytidylate kinase">
    <location>
        <begin position="1"/>
        <end position="217"/>
    </location>
</feature>
<feature type="binding site" evidence="1">
    <location>
        <begin position="10"/>
        <end position="18"/>
    </location>
    <ligand>
        <name>ATP</name>
        <dbReference type="ChEBI" id="CHEBI:30616"/>
    </ligand>
</feature>
<accession>B1IM76</accession>
<name>KCY_CLOBK</name>
<reference key="1">
    <citation type="journal article" date="2007" name="PLoS ONE">
        <title>Analysis of the neurotoxin complex genes in Clostridium botulinum A1-A4 and B1 strains: BoNT/A3, /Ba4 and /B1 clusters are located within plasmids.</title>
        <authorList>
            <person name="Smith T.J."/>
            <person name="Hill K.K."/>
            <person name="Foley B.T."/>
            <person name="Detter J.C."/>
            <person name="Munk A.C."/>
            <person name="Bruce D.C."/>
            <person name="Doggett N.A."/>
            <person name="Smith L.A."/>
            <person name="Marks J.D."/>
            <person name="Xie G."/>
            <person name="Brettin T.S."/>
        </authorList>
    </citation>
    <scope>NUCLEOTIDE SEQUENCE [LARGE SCALE GENOMIC DNA]</scope>
    <source>
        <strain>Okra / Type B1</strain>
    </source>
</reference>
<evidence type="ECO:0000255" key="1">
    <source>
        <dbReference type="HAMAP-Rule" id="MF_00238"/>
    </source>
</evidence>
<keyword id="KW-0067">ATP-binding</keyword>
<keyword id="KW-0963">Cytoplasm</keyword>
<keyword id="KW-0418">Kinase</keyword>
<keyword id="KW-0547">Nucleotide-binding</keyword>
<keyword id="KW-0808">Transferase</keyword>
<sequence length="217" mass="24457">MLDISIAIDGPAGAGKSTIAKIIGNKLNIMYINTGSMYRAVTLMALKNNIEPYDIESLKALINSMNISFNGNNIIVNGKDLEEDIRMPIINNNVSKYAAVEEVRELLVSMQQNISKKYNVVMDGRDIGTVVLKDAPYKFFITASAEVRAKRRLKELKEKGININFRDVLKEIKERDYIDSNRKVNPLKQSKDAILIDTSNFTIEEVVDKICNIIKKD</sequence>
<protein>
    <recommendedName>
        <fullName evidence="1">Cytidylate kinase</fullName>
        <shortName evidence="1">CK</shortName>
        <ecNumber evidence="1">2.7.4.25</ecNumber>
    </recommendedName>
    <alternativeName>
        <fullName evidence="1">Cytidine monophosphate kinase</fullName>
        <shortName evidence="1">CMP kinase</shortName>
    </alternativeName>
</protein>
<organism>
    <name type="scientific">Clostridium botulinum (strain Okra / Type B1)</name>
    <dbReference type="NCBI Taxonomy" id="498213"/>
    <lineage>
        <taxon>Bacteria</taxon>
        <taxon>Bacillati</taxon>
        <taxon>Bacillota</taxon>
        <taxon>Clostridia</taxon>
        <taxon>Eubacteriales</taxon>
        <taxon>Clostridiaceae</taxon>
        <taxon>Clostridium</taxon>
    </lineage>
</organism>
<comment type="catalytic activity">
    <reaction evidence="1">
        <text>CMP + ATP = CDP + ADP</text>
        <dbReference type="Rhea" id="RHEA:11600"/>
        <dbReference type="ChEBI" id="CHEBI:30616"/>
        <dbReference type="ChEBI" id="CHEBI:58069"/>
        <dbReference type="ChEBI" id="CHEBI:60377"/>
        <dbReference type="ChEBI" id="CHEBI:456216"/>
        <dbReference type="EC" id="2.7.4.25"/>
    </reaction>
</comment>
<comment type="catalytic activity">
    <reaction evidence="1">
        <text>dCMP + ATP = dCDP + ADP</text>
        <dbReference type="Rhea" id="RHEA:25094"/>
        <dbReference type="ChEBI" id="CHEBI:30616"/>
        <dbReference type="ChEBI" id="CHEBI:57566"/>
        <dbReference type="ChEBI" id="CHEBI:58593"/>
        <dbReference type="ChEBI" id="CHEBI:456216"/>
        <dbReference type="EC" id="2.7.4.25"/>
    </reaction>
</comment>
<comment type="subcellular location">
    <subcellularLocation>
        <location evidence="1">Cytoplasm</location>
    </subcellularLocation>
</comment>
<comment type="similarity">
    <text evidence="1">Belongs to the cytidylate kinase family. Type 1 subfamily.</text>
</comment>
<proteinExistence type="inferred from homology"/>
<dbReference type="EC" id="2.7.4.25" evidence="1"/>
<dbReference type="EMBL" id="CP000939">
    <property type="protein sequence ID" value="ACA44210.1"/>
    <property type="molecule type" value="Genomic_DNA"/>
</dbReference>
<dbReference type="RefSeq" id="WP_015957596.1">
    <property type="nucleotide sequence ID" value="NC_010516.1"/>
</dbReference>
<dbReference type="SMR" id="B1IM76"/>
<dbReference type="KEGG" id="cbb:CLD_2832"/>
<dbReference type="HOGENOM" id="CLU_079959_0_2_9"/>
<dbReference type="Proteomes" id="UP000008541">
    <property type="component" value="Chromosome"/>
</dbReference>
<dbReference type="GO" id="GO:0005829">
    <property type="term" value="C:cytosol"/>
    <property type="evidence" value="ECO:0007669"/>
    <property type="project" value="TreeGrafter"/>
</dbReference>
<dbReference type="GO" id="GO:0005524">
    <property type="term" value="F:ATP binding"/>
    <property type="evidence" value="ECO:0007669"/>
    <property type="project" value="UniProtKB-UniRule"/>
</dbReference>
<dbReference type="GO" id="GO:0036430">
    <property type="term" value="F:CMP kinase activity"/>
    <property type="evidence" value="ECO:0007669"/>
    <property type="project" value="RHEA"/>
</dbReference>
<dbReference type="GO" id="GO:0036431">
    <property type="term" value="F:dCMP kinase activity"/>
    <property type="evidence" value="ECO:0007669"/>
    <property type="project" value="RHEA"/>
</dbReference>
<dbReference type="GO" id="GO:0015949">
    <property type="term" value="P:nucleobase-containing small molecule interconversion"/>
    <property type="evidence" value="ECO:0007669"/>
    <property type="project" value="TreeGrafter"/>
</dbReference>
<dbReference type="GO" id="GO:0006220">
    <property type="term" value="P:pyrimidine nucleotide metabolic process"/>
    <property type="evidence" value="ECO:0007669"/>
    <property type="project" value="UniProtKB-UniRule"/>
</dbReference>
<dbReference type="CDD" id="cd02020">
    <property type="entry name" value="CMPK"/>
    <property type="match status" value="1"/>
</dbReference>
<dbReference type="FunFam" id="3.40.50.300:FF:002511">
    <property type="entry name" value="Cytidylate kinase"/>
    <property type="match status" value="1"/>
</dbReference>
<dbReference type="Gene3D" id="3.40.50.300">
    <property type="entry name" value="P-loop containing nucleotide triphosphate hydrolases"/>
    <property type="match status" value="1"/>
</dbReference>
<dbReference type="HAMAP" id="MF_00238">
    <property type="entry name" value="Cytidyl_kinase_type1"/>
    <property type="match status" value="1"/>
</dbReference>
<dbReference type="InterPro" id="IPR003136">
    <property type="entry name" value="Cytidylate_kin"/>
</dbReference>
<dbReference type="InterPro" id="IPR011994">
    <property type="entry name" value="Cytidylate_kinase_dom"/>
</dbReference>
<dbReference type="InterPro" id="IPR027417">
    <property type="entry name" value="P-loop_NTPase"/>
</dbReference>
<dbReference type="NCBIfam" id="TIGR00017">
    <property type="entry name" value="cmk"/>
    <property type="match status" value="1"/>
</dbReference>
<dbReference type="PANTHER" id="PTHR21299:SF2">
    <property type="entry name" value="CYTIDYLATE KINASE"/>
    <property type="match status" value="1"/>
</dbReference>
<dbReference type="PANTHER" id="PTHR21299">
    <property type="entry name" value="CYTIDYLATE KINASE/PANTOATE-BETA-ALANINE LIGASE"/>
    <property type="match status" value="1"/>
</dbReference>
<dbReference type="Pfam" id="PF02224">
    <property type="entry name" value="Cytidylate_kin"/>
    <property type="match status" value="1"/>
</dbReference>
<dbReference type="SUPFAM" id="SSF52540">
    <property type="entry name" value="P-loop containing nucleoside triphosphate hydrolases"/>
    <property type="match status" value="1"/>
</dbReference>